<dbReference type="EMBL" id="M33601">
    <property type="protein sequence ID" value="AAA30387.1"/>
    <property type="molecule type" value="mRNA"/>
</dbReference>
<dbReference type="PIR" id="A34851">
    <property type="entry name" value="A34851"/>
</dbReference>
<dbReference type="RefSeq" id="NP_776668.1">
    <molecule id="P17870-1"/>
    <property type="nucleotide sequence ID" value="NM_174243.3"/>
</dbReference>
<dbReference type="RefSeq" id="XP_024830759.1">
    <molecule id="P17870-2"/>
    <property type="nucleotide sequence ID" value="XM_024974991.2"/>
</dbReference>
<dbReference type="PDB" id="1G4M">
    <property type="method" value="X-ray"/>
    <property type="resolution" value="1.90 A"/>
    <property type="chains" value="A/B=1-393"/>
</dbReference>
<dbReference type="PDB" id="1G4R">
    <property type="method" value="X-ray"/>
    <property type="resolution" value="2.20 A"/>
    <property type="chains" value="A=1-393"/>
</dbReference>
<dbReference type="PDB" id="1JSY">
    <property type="method" value="X-ray"/>
    <property type="resolution" value="2.90 A"/>
    <property type="chains" value="A=1-418"/>
</dbReference>
<dbReference type="PDB" id="1ZSH">
    <property type="method" value="X-ray"/>
    <property type="resolution" value="2.90 A"/>
    <property type="chains" value="A=1-418"/>
</dbReference>
<dbReference type="PDB" id="2WTR">
    <property type="method" value="X-ray"/>
    <property type="resolution" value="2.90 A"/>
    <property type="chains" value="A/B=1-418"/>
</dbReference>
<dbReference type="PDB" id="3GC3">
    <property type="method" value="X-ray"/>
    <property type="resolution" value="2.20 A"/>
    <property type="chains" value="A=1-393"/>
</dbReference>
<dbReference type="PDB" id="3GD1">
    <property type="method" value="X-ray"/>
    <property type="resolution" value="3.50 A"/>
    <property type="chains" value="C/E=1-393"/>
</dbReference>
<dbReference type="PDB" id="6NI2">
    <property type="method" value="EM"/>
    <property type="resolution" value="4.00 A"/>
    <property type="chains" value="B=1-393"/>
</dbReference>
<dbReference type="PDB" id="7DF9">
    <property type="method" value="X-ray"/>
    <property type="resolution" value="3.17 A"/>
    <property type="chains" value="A=1-418"/>
</dbReference>
<dbReference type="PDB" id="7DFA">
    <property type="method" value="X-ray"/>
    <property type="resolution" value="2.54 A"/>
    <property type="chains" value="A=1-418"/>
</dbReference>
<dbReference type="PDB" id="7DFB">
    <property type="method" value="X-ray"/>
    <property type="resolution" value="3.28 A"/>
    <property type="chains" value="A=1-418"/>
</dbReference>
<dbReference type="PDB" id="7DFC">
    <property type="method" value="X-ray"/>
    <property type="resolution" value="2.49 A"/>
    <property type="chains" value="A=1-418"/>
</dbReference>
<dbReference type="PDB" id="8J97">
    <property type="method" value="EM"/>
    <property type="resolution" value="3.20 A"/>
    <property type="chains" value="A=5-357"/>
</dbReference>
<dbReference type="PDB" id="8JAF">
    <property type="method" value="EM"/>
    <property type="resolution" value="3.10 A"/>
    <property type="chains" value="A=5-362"/>
</dbReference>
<dbReference type="PDB" id="8JRU">
    <property type="method" value="EM"/>
    <property type="resolution" value="3.50 A"/>
    <property type="chains" value="A/H/L=1-379"/>
</dbReference>
<dbReference type="PDB" id="8TII">
    <property type="method" value="EM"/>
    <property type="resolution" value="3.00 A"/>
    <property type="chains" value="A=1-418"/>
</dbReference>
<dbReference type="PDB" id="8WU1">
    <property type="method" value="EM"/>
    <property type="resolution" value="3.20 A"/>
    <property type="chains" value="C=1-393"/>
</dbReference>
<dbReference type="PDBsum" id="1G4M"/>
<dbReference type="PDBsum" id="1G4R"/>
<dbReference type="PDBsum" id="1JSY"/>
<dbReference type="PDBsum" id="1ZSH"/>
<dbReference type="PDBsum" id="2WTR"/>
<dbReference type="PDBsum" id="3GC3"/>
<dbReference type="PDBsum" id="3GD1"/>
<dbReference type="PDBsum" id="6NI2"/>
<dbReference type="PDBsum" id="7DF9"/>
<dbReference type="PDBsum" id="7DFA"/>
<dbReference type="PDBsum" id="7DFB"/>
<dbReference type="PDBsum" id="7DFC"/>
<dbReference type="PDBsum" id="8J97"/>
<dbReference type="PDBsum" id="8JAF"/>
<dbReference type="PDBsum" id="8JRU"/>
<dbReference type="PDBsum" id="8TII"/>
<dbReference type="PDBsum" id="8WU1"/>
<dbReference type="EMDB" id="EMD-36090"/>
<dbReference type="EMDB" id="EMD-36126"/>
<dbReference type="EMDB" id="EMD-36606"/>
<dbReference type="EMDB" id="EMD-37849"/>
<dbReference type="EMDB" id="EMD-41289"/>
<dbReference type="EMDB" id="EMD-41297"/>
<dbReference type="EMDB" id="EMD-9375"/>
<dbReference type="SMR" id="P17870"/>
<dbReference type="DIP" id="DIP-61028N"/>
<dbReference type="ELM" id="P17870"/>
<dbReference type="FunCoup" id="P17870">
    <property type="interactions" value="2113"/>
</dbReference>
<dbReference type="IntAct" id="P17870">
    <property type="interactions" value="1"/>
</dbReference>
<dbReference type="STRING" id="9913.ENSBTAP00000062009"/>
<dbReference type="BindingDB" id="P17870"/>
<dbReference type="PaxDb" id="9913-ENSBTAP00000027296"/>
<dbReference type="PeptideAtlas" id="P17870"/>
<dbReference type="Ensembl" id="ENSBTAT00000076911.2">
    <molecule id="P17870-1"/>
    <property type="protein sequence ID" value="ENSBTAP00000064010.2"/>
    <property type="gene ID" value="ENSBTAG00000020485.7"/>
</dbReference>
<dbReference type="GeneID" id="281637"/>
<dbReference type="KEGG" id="bta:281637"/>
<dbReference type="CTD" id="408"/>
<dbReference type="VEuPathDB" id="HostDB:ENSBTAG00000020485"/>
<dbReference type="eggNOG" id="KOG3865">
    <property type="taxonomic scope" value="Eukaryota"/>
</dbReference>
<dbReference type="GeneTree" id="ENSGT00950000182887"/>
<dbReference type="HOGENOM" id="CLU_033484_1_1_1"/>
<dbReference type="InParanoid" id="P17870"/>
<dbReference type="OMA" id="MQLERPM"/>
<dbReference type="OrthoDB" id="298939at2759"/>
<dbReference type="TreeFam" id="TF314260"/>
<dbReference type="Reactome" id="R-BTA-418555">
    <property type="pathway name" value="G alpha (s) signalling events"/>
</dbReference>
<dbReference type="Reactome" id="R-BTA-432720">
    <property type="pathway name" value="Lysosome Vesicle Biogenesis"/>
</dbReference>
<dbReference type="Reactome" id="R-BTA-432722">
    <property type="pathway name" value="Golgi Associated Vesicle Biogenesis"/>
</dbReference>
<dbReference type="Reactome" id="R-BTA-456926">
    <property type="pathway name" value="Thrombin signalling through proteinase activated receptors (PARs)"/>
</dbReference>
<dbReference type="Reactome" id="R-BTA-5635838">
    <property type="pathway name" value="Activation of SMO"/>
</dbReference>
<dbReference type="Reactome" id="R-BTA-5674135">
    <property type="pathway name" value="MAP2K and MAPK activation"/>
</dbReference>
<dbReference type="Reactome" id="R-BTA-5689880">
    <property type="pathway name" value="Ub-specific processing proteases"/>
</dbReference>
<dbReference type="Reactome" id="R-BTA-8856825">
    <property type="pathway name" value="Cargo recognition for clathrin-mediated endocytosis"/>
</dbReference>
<dbReference type="Reactome" id="R-BTA-8856828">
    <property type="pathway name" value="Clathrin-mediated endocytosis"/>
</dbReference>
<dbReference type="Reactome" id="R-BTA-9839389">
    <property type="pathway name" value="TGFBR3 regulates TGF-beta signaling"/>
</dbReference>
<dbReference type="EvolutionaryTrace" id="P17870"/>
<dbReference type="Proteomes" id="UP000009136">
    <property type="component" value="Chromosome 15"/>
</dbReference>
<dbReference type="Bgee" id="ENSBTAG00000020485">
    <property type="expression patterns" value="Expressed in monocyte and 103 other cell types or tissues"/>
</dbReference>
<dbReference type="GO" id="GO:0030132">
    <property type="term" value="C:clathrin coat of coated pit"/>
    <property type="evidence" value="ECO:0000315"/>
    <property type="project" value="CAFA"/>
</dbReference>
<dbReference type="GO" id="GO:0005737">
    <property type="term" value="C:cytoplasm"/>
    <property type="evidence" value="ECO:0000314"/>
    <property type="project" value="UniProtKB"/>
</dbReference>
<dbReference type="GO" id="GO:0031410">
    <property type="term" value="C:cytoplasmic vesicle"/>
    <property type="evidence" value="ECO:0000314"/>
    <property type="project" value="UniProtKB"/>
</dbReference>
<dbReference type="GO" id="GO:0005829">
    <property type="term" value="C:cytosol"/>
    <property type="evidence" value="ECO:0000318"/>
    <property type="project" value="GO_Central"/>
</dbReference>
<dbReference type="GO" id="GO:0005634">
    <property type="term" value="C:nucleus"/>
    <property type="evidence" value="ECO:0000318"/>
    <property type="project" value="GO_Central"/>
</dbReference>
<dbReference type="GO" id="GO:0005886">
    <property type="term" value="C:plasma membrane"/>
    <property type="evidence" value="ECO:0000314"/>
    <property type="project" value="UniProtKB"/>
</dbReference>
<dbReference type="GO" id="GO:0031143">
    <property type="term" value="C:pseudopodium"/>
    <property type="evidence" value="ECO:0007669"/>
    <property type="project" value="UniProtKB-SubCell"/>
</dbReference>
<dbReference type="GO" id="GO:0033130">
    <property type="term" value="F:acetylcholine receptor binding"/>
    <property type="evidence" value="ECO:0000353"/>
    <property type="project" value="CAFA"/>
</dbReference>
<dbReference type="GO" id="GO:0035612">
    <property type="term" value="F:AP-2 adaptor complex binding"/>
    <property type="evidence" value="ECO:0000315"/>
    <property type="project" value="CAFA"/>
</dbReference>
<dbReference type="GO" id="GO:0030276">
    <property type="term" value="F:clathrin binding"/>
    <property type="evidence" value="ECO:0000315"/>
    <property type="project" value="CAFA"/>
</dbReference>
<dbReference type="GO" id="GO:0032050">
    <property type="term" value="F:clathrin heavy chain binding"/>
    <property type="evidence" value="ECO:0000353"/>
    <property type="project" value="CAFA"/>
</dbReference>
<dbReference type="GO" id="GO:0001664">
    <property type="term" value="F:G protein-coupled receptor binding"/>
    <property type="evidence" value="ECO:0000318"/>
    <property type="project" value="GO_Central"/>
</dbReference>
<dbReference type="GO" id="GO:0000822">
    <property type="term" value="F:inositol hexakisphosphate binding"/>
    <property type="evidence" value="ECO:0000314"/>
    <property type="project" value="AgBase"/>
</dbReference>
<dbReference type="GO" id="GO:0060090">
    <property type="term" value="F:molecular adaptor activity"/>
    <property type="evidence" value="ECO:0000269"/>
    <property type="project" value="DisProt"/>
</dbReference>
<dbReference type="GO" id="GO:0005547">
    <property type="term" value="F:phosphatidylinositol-3,4,5-trisphosphate binding"/>
    <property type="evidence" value="ECO:0000314"/>
    <property type="project" value="AgBase"/>
</dbReference>
<dbReference type="GO" id="GO:0036094">
    <property type="term" value="F:small molecule binding"/>
    <property type="evidence" value="ECO:0000269"/>
    <property type="project" value="DisProt"/>
</dbReference>
<dbReference type="GO" id="GO:0072583">
    <property type="term" value="P:clathrin-dependent endocytosis"/>
    <property type="evidence" value="ECO:0000315"/>
    <property type="project" value="CAFA"/>
</dbReference>
<dbReference type="GO" id="GO:0002029">
    <property type="term" value="P:desensitization of G protein-coupled receptor signaling pathway"/>
    <property type="evidence" value="ECO:0000304"/>
    <property type="project" value="AgBase"/>
</dbReference>
<dbReference type="GO" id="GO:0002031">
    <property type="term" value="P:G protein-coupled receptor internalization"/>
    <property type="evidence" value="ECO:0000318"/>
    <property type="project" value="GO_Central"/>
</dbReference>
<dbReference type="GO" id="GO:0045746">
    <property type="term" value="P:negative regulation of Notch signaling pathway"/>
    <property type="evidence" value="ECO:0000250"/>
    <property type="project" value="UniProtKB"/>
</dbReference>
<dbReference type="GO" id="GO:0070374">
    <property type="term" value="P:positive regulation of ERK1 and ERK2 cascade"/>
    <property type="evidence" value="ECO:0000318"/>
    <property type="project" value="GO_Central"/>
</dbReference>
<dbReference type="GO" id="GO:0001934">
    <property type="term" value="P:positive regulation of protein phosphorylation"/>
    <property type="evidence" value="ECO:0000250"/>
    <property type="project" value="UniProtKB"/>
</dbReference>
<dbReference type="GO" id="GO:0002092">
    <property type="term" value="P:positive regulation of receptor internalization"/>
    <property type="evidence" value="ECO:0000250"/>
    <property type="project" value="UniProtKB"/>
</dbReference>
<dbReference type="GO" id="GO:0015031">
    <property type="term" value="P:protein transport"/>
    <property type="evidence" value="ECO:0007669"/>
    <property type="project" value="UniProtKB-KW"/>
</dbReference>
<dbReference type="GO" id="GO:0031623">
    <property type="term" value="P:receptor internalization"/>
    <property type="evidence" value="ECO:0000304"/>
    <property type="project" value="AgBase"/>
</dbReference>
<dbReference type="GO" id="GO:0007165">
    <property type="term" value="P:signal transduction"/>
    <property type="evidence" value="ECO:0007669"/>
    <property type="project" value="InterPro"/>
</dbReference>
<dbReference type="GO" id="GO:0006511">
    <property type="term" value="P:ubiquitin-dependent protein catabolic process"/>
    <property type="evidence" value="ECO:0000250"/>
    <property type="project" value="UniProtKB"/>
</dbReference>
<dbReference type="DisProt" id="DP00390"/>
<dbReference type="FunFam" id="2.60.40.640:FF:000003">
    <property type="entry name" value="beta-arrestin-1 isoform X1"/>
    <property type="match status" value="1"/>
</dbReference>
<dbReference type="FunFam" id="2.60.40.840:FF:000001">
    <property type="entry name" value="beta-arrestin-1 isoform X1"/>
    <property type="match status" value="1"/>
</dbReference>
<dbReference type="Gene3D" id="2.60.40.640">
    <property type="match status" value="1"/>
</dbReference>
<dbReference type="Gene3D" id="2.60.40.840">
    <property type="match status" value="1"/>
</dbReference>
<dbReference type="InterPro" id="IPR000698">
    <property type="entry name" value="Arrestin"/>
</dbReference>
<dbReference type="InterPro" id="IPR014752">
    <property type="entry name" value="Arrestin-like_C"/>
</dbReference>
<dbReference type="InterPro" id="IPR011021">
    <property type="entry name" value="Arrestin-like_N"/>
</dbReference>
<dbReference type="InterPro" id="IPR011022">
    <property type="entry name" value="Arrestin_C-like"/>
</dbReference>
<dbReference type="InterPro" id="IPR017864">
    <property type="entry name" value="Arrestin_CS"/>
</dbReference>
<dbReference type="InterPro" id="IPR014753">
    <property type="entry name" value="Arrestin_N"/>
</dbReference>
<dbReference type="InterPro" id="IPR014756">
    <property type="entry name" value="Ig_E-set"/>
</dbReference>
<dbReference type="PANTHER" id="PTHR11792">
    <property type="entry name" value="ARRESTIN"/>
    <property type="match status" value="1"/>
</dbReference>
<dbReference type="PANTHER" id="PTHR11792:SF22">
    <property type="entry name" value="BETA-ARRESTIN-1"/>
    <property type="match status" value="1"/>
</dbReference>
<dbReference type="Pfam" id="PF02752">
    <property type="entry name" value="Arrestin_C"/>
    <property type="match status" value="1"/>
</dbReference>
<dbReference type="Pfam" id="PF00339">
    <property type="entry name" value="Arrestin_N"/>
    <property type="match status" value="1"/>
</dbReference>
<dbReference type="PRINTS" id="PR00309">
    <property type="entry name" value="ARRESTIN"/>
</dbReference>
<dbReference type="SMART" id="SM01017">
    <property type="entry name" value="Arrestin_C"/>
    <property type="match status" value="1"/>
</dbReference>
<dbReference type="SUPFAM" id="SSF81296">
    <property type="entry name" value="E set domains"/>
    <property type="match status" value="2"/>
</dbReference>
<dbReference type="PROSITE" id="PS00295">
    <property type="entry name" value="ARRESTINS"/>
    <property type="match status" value="1"/>
</dbReference>
<organism>
    <name type="scientific">Bos taurus</name>
    <name type="common">Bovine</name>
    <dbReference type="NCBI Taxonomy" id="9913"/>
    <lineage>
        <taxon>Eukaryota</taxon>
        <taxon>Metazoa</taxon>
        <taxon>Chordata</taxon>
        <taxon>Craniata</taxon>
        <taxon>Vertebrata</taxon>
        <taxon>Euteleostomi</taxon>
        <taxon>Mammalia</taxon>
        <taxon>Eutheria</taxon>
        <taxon>Laurasiatheria</taxon>
        <taxon>Artiodactyla</taxon>
        <taxon>Ruminantia</taxon>
        <taxon>Pecora</taxon>
        <taxon>Bovidae</taxon>
        <taxon>Bovinae</taxon>
        <taxon>Bos</taxon>
    </lineage>
</organism>
<gene>
    <name type="primary">ARRB1</name>
</gene>
<sequence>MGDKGTRVFKKASPNGKLTVYLGKRDFVDHIDLVEPVDGVVLVDPEYLKERRVYVTLTCAFRYGREDLDVLGLTFRKDLFVANVQSFPPAPEDKKPLTRLQERLIKKLGEHAYPFTFEIPPNLPCSVTLQPGPEDTGKACGVDYEVKAFCAENLEEKIHKRNSVRLVIRKVQYAPERPGPQPTAETTRQFLMSDKPLHLEASLDKEIYYHGEPISVNVHVTNNTNKTVKKIKISVRQYADICLFNTAQYKCPVAMEEADDTVAPSSTFCKVYTLTPFLANNREKRGLALDGKLKHEDTNLASSTLLREGANREILGIIVSYKVKVKLVVSRGGLLGDLASSDVAVELPFTLMHPKPKEEPPHREVPEHETPVDTNLIELDTNDDDIVFEDFARQRLKGMKDDKEEEEDGTGSPRLNDR</sequence>
<feature type="chain" id="PRO_0000205193" description="Beta-arrestin-1">
    <location>
        <begin position="1"/>
        <end position="418"/>
    </location>
</feature>
<feature type="region of interest" description="Interaction with SRC" evidence="1">
    <location>
        <begin position="1"/>
        <end position="163"/>
    </location>
</feature>
<feature type="region of interest" description="Interaction with CHRM2">
    <location>
        <begin position="45"/>
        <end position="86"/>
    </location>
</feature>
<feature type="region of interest" description="Interaction with TRAF6" evidence="1">
    <location>
        <begin position="318"/>
        <end position="418"/>
    </location>
</feature>
<feature type="region of interest" description="Disordered" evidence="4">
    <location>
        <begin position="353"/>
        <end position="375"/>
    </location>
</feature>
<feature type="region of interest" description="Disordered" evidence="4">
    <location>
        <begin position="397"/>
        <end position="418"/>
    </location>
</feature>
<feature type="short sequence motif" description="[DE]-X(1,2)-F-X-X-[FL]-X-X-X-R motif">
    <location>
        <begin position="385"/>
        <end position="395"/>
    </location>
</feature>
<feature type="compositionally biased region" description="Basic and acidic residues" evidence="4">
    <location>
        <begin position="355"/>
        <end position="371"/>
    </location>
</feature>
<feature type="binding site">
    <location>
        <position position="250"/>
    </location>
    <ligand>
        <name>1D-myo-inositol hexakisphosphate</name>
        <dbReference type="ChEBI" id="CHEBI:58130"/>
    </ligand>
</feature>
<feature type="binding site">
    <location>
        <position position="255"/>
    </location>
    <ligand>
        <name>1D-myo-inositol hexakisphosphate</name>
        <dbReference type="ChEBI" id="CHEBI:58130"/>
    </ligand>
</feature>
<feature type="binding site">
    <location>
        <position position="324"/>
    </location>
    <ligand>
        <name>1D-myo-inositol hexakisphosphate</name>
        <dbReference type="ChEBI" id="CHEBI:58130"/>
    </ligand>
</feature>
<feature type="binding site">
    <location>
        <position position="326"/>
    </location>
    <ligand>
        <name>1D-myo-inositol hexakisphosphate</name>
        <dbReference type="ChEBI" id="CHEBI:58130"/>
    </ligand>
</feature>
<feature type="modified residue" description="Phosphotyrosine" evidence="3">
    <location>
        <position position="47"/>
    </location>
</feature>
<feature type="modified residue" description="Phosphoserine; by GRK5" evidence="2">
    <location>
        <position position="412"/>
    </location>
</feature>
<feature type="splice variant" id="VSP_000321" description="In isoform 1B." evidence="11">
    <location>
        <begin position="334"/>
        <end position="341"/>
    </location>
</feature>
<feature type="mutagenesis site" description="Impairs InsP6-binding and oligomerization; when associated with Q-160 and Q-161." evidence="7">
    <original>K</original>
    <variation>Q</variation>
    <location>
        <position position="157"/>
    </location>
</feature>
<feature type="mutagenesis site" description="Impairs InsP6-binding and oligomerization; when associated with Q-157 and Q-161." evidence="7">
    <original>K</original>
    <variation>Q</variation>
    <location>
        <position position="160"/>
    </location>
</feature>
<feature type="mutagenesis site" description="Impairs InsP6-binding and oligomerization; when associated with Q-157 and Q-160." evidence="7">
    <original>R</original>
    <variation>Q</variation>
    <location>
        <position position="161"/>
    </location>
</feature>
<feature type="mutagenesis site" description="Impairs InsP6-binding and oligomerization; when associated with Q-236, Q-250, Q-324 and Q-326." evidence="7">
    <original>K</original>
    <variation>Q</variation>
    <location>
        <position position="232"/>
    </location>
</feature>
<feature type="mutagenesis site" description="Impairs InsP6-binding and oligomerization; when associated with Q-232, Q-250, Q-324 and Q-326." evidence="7">
    <original>R</original>
    <variation>Q</variation>
    <location>
        <position position="236"/>
    </location>
</feature>
<feature type="mutagenesis site" description="Impairs InsP6-binding and oligomerization; when associated with Q-232, Q-236, Q-324 and Q-326." evidence="7">
    <original>K</original>
    <variation>Q</variation>
    <location>
        <position position="250"/>
    </location>
</feature>
<feature type="mutagenesis site" description="Impairs InsP6-binding and oligomerization; when associated with Q-232, Q-236, Q-250 and Q-326." evidence="7">
    <original>K</original>
    <variation>Q</variation>
    <location>
        <position position="324"/>
    </location>
</feature>
<feature type="mutagenesis site" description="Impairs InsP6-binding and oligomerization; when associated with Q-232, Q-236, Q-250 and Q-324." evidence="7">
    <original>K</original>
    <variation>Q</variation>
    <location>
        <position position="326"/>
    </location>
</feature>
<feature type="mutagenesis site" description="Abolishes interaction with AP2B1; no effect on interaction with CLTC." evidence="5">
    <original>F</original>
    <variation>A</variation>
    <location>
        <position position="391"/>
    </location>
</feature>
<feature type="mutagenesis site" description="Abolishes interaction with AP2B1; impairs interaction with CLTC." evidence="5">
    <original>R</original>
    <variation>E</variation>
    <location>
        <position position="395"/>
    </location>
</feature>
<feature type="mutagenesis site" description="Impairs interaction with AP2B1; no effect on interaction with CLTC." evidence="5">
    <original>L</original>
    <variation>A</variation>
    <location>
        <position position="396"/>
    </location>
</feature>
<feature type="strand" evidence="12">
    <location>
        <begin position="6"/>
        <end position="12"/>
    </location>
</feature>
<feature type="strand" evidence="14">
    <location>
        <begin position="14"/>
        <end position="17"/>
    </location>
</feature>
<feature type="strand" evidence="12">
    <location>
        <begin position="19"/>
        <end position="23"/>
    </location>
</feature>
<feature type="strand" evidence="12">
    <location>
        <begin position="25"/>
        <end position="29"/>
    </location>
</feature>
<feature type="strand" evidence="14">
    <location>
        <begin position="31"/>
        <end position="34"/>
    </location>
</feature>
<feature type="strand" evidence="12">
    <location>
        <begin position="37"/>
        <end position="42"/>
    </location>
</feature>
<feature type="helix" evidence="12">
    <location>
        <begin position="45"/>
        <end position="48"/>
    </location>
</feature>
<feature type="strand" evidence="12">
    <location>
        <begin position="52"/>
        <end position="64"/>
    </location>
</feature>
<feature type="turn" evidence="12">
    <location>
        <begin position="71"/>
        <end position="73"/>
    </location>
</feature>
<feature type="strand" evidence="12">
    <location>
        <begin position="75"/>
        <end position="88"/>
    </location>
</feature>
<feature type="strand" evidence="13">
    <location>
        <begin position="91"/>
        <end position="93"/>
    </location>
</feature>
<feature type="helix" evidence="12">
    <location>
        <begin position="99"/>
        <end position="107"/>
    </location>
</feature>
<feature type="helix" evidence="16">
    <location>
        <begin position="109"/>
        <end position="111"/>
    </location>
</feature>
<feature type="strand" evidence="12">
    <location>
        <begin position="112"/>
        <end position="117"/>
    </location>
</feature>
<feature type="strand" evidence="14">
    <location>
        <begin position="121"/>
        <end position="123"/>
    </location>
</feature>
<feature type="strand" evidence="12">
    <location>
        <begin position="127"/>
        <end position="130"/>
    </location>
</feature>
<feature type="helix" evidence="12">
    <location>
        <begin position="133"/>
        <end position="138"/>
    </location>
</feature>
<feature type="strand" evidence="12">
    <location>
        <begin position="140"/>
        <end position="153"/>
    </location>
</feature>
<feature type="helix" evidence="12">
    <location>
        <begin position="160"/>
        <end position="162"/>
    </location>
</feature>
<feature type="strand" evidence="12">
    <location>
        <begin position="163"/>
        <end position="172"/>
    </location>
</feature>
<feature type="strand" evidence="12">
    <location>
        <begin position="185"/>
        <end position="189"/>
    </location>
</feature>
<feature type="strand" evidence="12">
    <location>
        <begin position="191"/>
        <end position="195"/>
    </location>
</feature>
<feature type="strand" evidence="12">
    <location>
        <begin position="197"/>
        <end position="204"/>
    </location>
</feature>
<feature type="strand" evidence="12">
    <location>
        <begin position="206"/>
        <end position="209"/>
    </location>
</feature>
<feature type="strand" evidence="12">
    <location>
        <begin position="214"/>
        <end position="222"/>
    </location>
</feature>
<feature type="strand" evidence="18">
    <location>
        <begin position="224"/>
        <end position="226"/>
    </location>
</feature>
<feature type="strand" evidence="12">
    <location>
        <begin position="228"/>
        <end position="241"/>
    </location>
</feature>
<feature type="strand" evidence="12">
    <location>
        <begin position="243"/>
        <end position="245"/>
    </location>
</feature>
<feature type="strand" evidence="12">
    <location>
        <begin position="247"/>
        <end position="258"/>
    </location>
</feature>
<feature type="strand" evidence="12">
    <location>
        <begin position="266"/>
        <end position="274"/>
    </location>
</feature>
<feature type="helix" evidence="12">
    <location>
        <begin position="278"/>
        <end position="280"/>
    </location>
</feature>
<feature type="turn" evidence="12">
    <location>
        <begin position="281"/>
        <end position="283"/>
    </location>
</feature>
<feature type="strand" evidence="12">
    <location>
        <begin position="285"/>
        <end position="291"/>
    </location>
</feature>
<feature type="strand" evidence="18">
    <location>
        <begin position="293"/>
        <end position="295"/>
    </location>
</feature>
<feature type="strand" evidence="17">
    <location>
        <begin position="308"/>
        <end position="310"/>
    </location>
</feature>
<feature type="helix" evidence="12">
    <location>
        <begin position="313"/>
        <end position="315"/>
    </location>
</feature>
<feature type="strand" evidence="12">
    <location>
        <begin position="316"/>
        <end position="329"/>
    </location>
</feature>
<feature type="helix" evidence="18">
    <location>
        <begin position="333"/>
        <end position="335"/>
    </location>
</feature>
<feature type="helix" evidence="15">
    <location>
        <begin position="336"/>
        <end position="338"/>
    </location>
</feature>
<feature type="strand" evidence="12">
    <location>
        <begin position="342"/>
        <end position="352"/>
    </location>
</feature>
<feature type="strand" evidence="14">
    <location>
        <begin position="355"/>
        <end position="358"/>
    </location>
</feature>
<feature type="strand" evidence="17">
    <location>
        <begin position="362"/>
        <end position="365"/>
    </location>
</feature>
<feature type="strand" evidence="12">
    <location>
        <begin position="386"/>
        <end position="390"/>
    </location>
</feature>
<accession>P17870</accession>
<keyword id="KW-0002">3D-structure</keyword>
<keyword id="KW-0025">Alternative splicing</keyword>
<keyword id="KW-1003">Cell membrane</keyword>
<keyword id="KW-0966">Cell projection</keyword>
<keyword id="KW-0168">Coated pit</keyword>
<keyword id="KW-0963">Cytoplasm</keyword>
<keyword id="KW-0968">Cytoplasmic vesicle</keyword>
<keyword id="KW-0472">Membrane</keyword>
<keyword id="KW-0539">Nucleus</keyword>
<keyword id="KW-0597">Phosphoprotein</keyword>
<keyword id="KW-0653">Protein transport</keyword>
<keyword id="KW-1185">Reference proteome</keyword>
<keyword id="KW-0734">Signal transduction inhibitor</keyword>
<keyword id="KW-0804">Transcription</keyword>
<keyword id="KW-0805">Transcription regulation</keyword>
<keyword id="KW-0813">Transport</keyword>
<keyword id="KW-0832">Ubl conjugation</keyword>
<reference key="1">
    <citation type="journal article" date="1990" name="Science">
        <title>Beta-arrestin: a protein that regulates beta-adrenergic receptor function.</title>
        <authorList>
            <person name="Lohse M.J."/>
            <person name="Benovic J.L."/>
            <person name="Codina J."/>
            <person name="Caron M.G."/>
            <person name="Lefkowitz R.J."/>
        </authorList>
    </citation>
    <scope>NUCLEOTIDE SEQUENCE [MRNA]</scope>
    <scope>FUNCTION</scope>
</reference>
<reference key="2">
    <citation type="journal article" date="1992" name="J. Biol. Chem.">
        <title>Receptor-specific desensitization with purified proteins. Kinase dependence and receptor specificity of beta-arrestin and arrestin in the beta 2-adrenergic receptor and rhodopsin systems.</title>
        <authorList>
            <person name="Lohse M.J."/>
            <person name="Andexinger S."/>
            <person name="Pitcher J."/>
            <person name="Trukawinski S."/>
            <person name="Codina J."/>
            <person name="Faure J.P."/>
            <person name="Caron M.G."/>
            <person name="Lefkowitz R.J."/>
        </authorList>
    </citation>
    <scope>FUNCTION IN BETA-ADRENERGIC RECEPTOR REGULATION</scope>
</reference>
<reference key="3">
    <citation type="journal article" date="1993" name="J. Biol. Chem.">
        <title>Polypeptide variants of beta-arrestin and arrestin3.</title>
        <authorList>
            <person name="Sterne-Marr R."/>
            <person name="Gurevich V.V."/>
            <person name="Goldsmith P."/>
            <person name="Bodine R.C."/>
            <person name="Sanders C."/>
            <person name="Donoso L.A."/>
            <person name="Benovic J.L."/>
        </authorList>
    </citation>
    <scope>ALTERNATIVE SPLICING</scope>
    <source>
        <tissue>Brain</tissue>
    </source>
</reference>
<reference key="4">
    <citation type="journal article" date="1995" name="J. Biol. Chem.">
        <title>Arrestin interactions with G protein-coupled receptors. Direct binding studies of wild type and mutant arrestins with rhodopsin, beta 2-adrenergic, and m2 muscarinic cholinergic receptors.</title>
        <authorList>
            <person name="Gurevich V.V."/>
            <person name="Dion S.B."/>
            <person name="Onorato J.J."/>
            <person name="Ptasienski J."/>
            <person name="Kim C.M."/>
            <person name="Sterne-Marr R."/>
            <person name="Hosey M.M."/>
            <person name="Benovic J.L."/>
        </authorList>
    </citation>
    <scope>INTERACTION WITH ADRB2 AND CHRM2</scope>
</reference>
<reference key="5">
    <citation type="journal article" date="1999" name="EMBO J.">
        <title>Arrestin function in G protein-coupled receptor endocytosis requires phosphoinositide binding.</title>
        <authorList>
            <person name="Gaidarov I."/>
            <person name="Krupnick J.G."/>
            <person name="Falck J.R."/>
            <person name="Benovic J.L."/>
            <person name="Keen J.H."/>
        </authorList>
    </citation>
    <scope>PHOSPHOINOSITIDE-BINDING</scope>
</reference>
<reference key="6">
    <citation type="journal article" date="1999" name="Proc. Natl. Acad. Sci. U.S.A.">
        <title>A direct role for arrestins in desensitization of the luteinizing hormone/choriogonadotropin receptor in porcine ovarian follicular membranes.</title>
        <authorList>
            <person name="Mukherjee S."/>
            <person name="Palczewski K."/>
            <person name="Gurevich V.V."/>
            <person name="Benovic J.L."/>
            <person name="Banga J.P."/>
            <person name="Hunzicker-Dunn M."/>
        </authorList>
    </citation>
    <scope>FUNCTION IN DESENSITIZATION OF LHCGR</scope>
</reference>
<reference key="7">
    <citation type="journal article" date="2002" name="J. Biol. Chem.">
        <title>Aspartic acid 564 in the third cytoplasmic loop of the luteinizing hormone/choriogonadotropin receptor is crucial for phosphorylation-independent interaction with arrestin2.</title>
        <authorList>
            <person name="Mukherjee S."/>
            <person name="Gurevich V.V."/>
            <person name="Preninger A."/>
            <person name="Hamm H.E."/>
            <person name="Bader M.-F."/>
            <person name="Fazleabas A.T."/>
            <person name="Birnbaumer L."/>
            <person name="Hunzicker-Dunn M."/>
        </authorList>
    </citation>
    <scope>INTERACTION WITH LHCGR</scope>
</reference>
<reference key="8">
    <citation type="journal article" date="2007" name="J. Cell Sci.">
        <title>The calcium-sensing receptor changes cell shape via a beta-arrestin-1 ARNO ARF6 ELMO protein network.</title>
        <authorList>
            <person name="Bouschet T."/>
            <person name="Martin S."/>
            <person name="Kanamarlapudi V."/>
            <person name="Mundell S."/>
            <person name="Henley J.M."/>
        </authorList>
    </citation>
    <scope>SUBCELLULAR LOCATION</scope>
    <scope>INTERACTION WITH CYTH2 AND CASR</scope>
</reference>
<reference key="9">
    <citation type="journal article" date="2008" name="J. Biol. Chem.">
        <title>Agonist-selective, receptor-specific interaction of human P2Y receptors with beta-arrestin-1 and -2.</title>
        <authorList>
            <person name="Hoffmann C."/>
            <person name="Ziegler N."/>
            <person name="Reiner S."/>
            <person name="Krasel C."/>
            <person name="Lohse M.J."/>
        </authorList>
    </citation>
    <scope>FUNCTION IN INTERNALIZATION OF P2Y PURINOCEPTORS</scope>
    <scope>SUBCELLULAR LOCATION</scope>
</reference>
<reference key="10">
    <citation type="journal article" date="2001" name="Structure">
        <title>Crystal structure of beta-arrestin at 1.9 A: possible mechanism of receptor binding and membrane translocation.</title>
        <authorList>
            <person name="Han M."/>
            <person name="Gurevich V.V."/>
            <person name="Vishnivetskiy S.A."/>
            <person name="Sigler P.B."/>
            <person name="Schubert C."/>
        </authorList>
    </citation>
    <scope>X-RAY CRYSTALLOGRAPHY (1.9 ANGSTROMS) OF 5-393</scope>
    <scope>INTERACTION WITH CHRM2</scope>
</reference>
<reference key="11">
    <citation type="journal article" date="2002" name="Biochemistry">
        <title>Scaffolding functions of arrestin-2 revealed by crystal structure and mutagenesis.</title>
        <authorList>
            <person name="Milano S.K."/>
            <person name="Pace H.C."/>
            <person name="Kim Y.-M."/>
            <person name="Brenner C."/>
            <person name="Benovic J.L."/>
        </authorList>
    </citation>
    <scope>X-RAY CRYSTALLOGRAPHY (2.9 ANGSTROMS)</scope>
    <scope>INTERACTION WITH AP2B1 AND CLTC</scope>
    <scope>MUTAGENESIS OF PHE-391; ARG-395 AND LEU-396</scope>
</reference>
<reference key="12">
    <citation type="journal article" date="2006" name="J. Biol. Chem.">
        <title>Nonvisual arrestin oligomerization and cellular localization are regulated by inositol hexakisphosphate binding.</title>
        <authorList>
            <person name="Milano S.K."/>
            <person name="Kim Y.-M."/>
            <person name="Stefano F.P."/>
            <person name="Benovic J.L."/>
            <person name="Brenner C."/>
        </authorList>
    </citation>
    <scope>X-RAY CRYSTALLOGRAPHY (2.9 ANGSTROMS)</scope>
    <scope>SUBUNIT</scope>
    <scope>INSP6-BINDING</scope>
    <scope>SUBCELLULAR LOCATION</scope>
    <scope>MUTAGENESIS OF LYS-157; LYS-160; ARG-161; LYS-232; ARG-236; LYS-250; LYS-324 AND LYS-326</scope>
</reference>
<evidence type="ECO:0000250" key="1"/>
<evidence type="ECO:0000250" key="2">
    <source>
        <dbReference type="UniProtKB" id="P49407"/>
    </source>
</evidence>
<evidence type="ECO:0000250" key="3">
    <source>
        <dbReference type="UniProtKB" id="Q8BWG8"/>
    </source>
</evidence>
<evidence type="ECO:0000256" key="4">
    <source>
        <dbReference type="SAM" id="MobiDB-lite"/>
    </source>
</evidence>
<evidence type="ECO:0000269" key="5">
    <source>
    </source>
</evidence>
<evidence type="ECO:0000269" key="6">
    <source>
    </source>
</evidence>
<evidence type="ECO:0000269" key="7">
    <source>
    </source>
</evidence>
<evidence type="ECO:0000269" key="8">
    <source>
    </source>
</evidence>
<evidence type="ECO:0000269" key="9">
    <source>
    </source>
</evidence>
<evidence type="ECO:0000269" key="10">
    <source>
    </source>
</evidence>
<evidence type="ECO:0000305" key="11"/>
<evidence type="ECO:0007829" key="12">
    <source>
        <dbReference type="PDB" id="1G4M"/>
    </source>
</evidence>
<evidence type="ECO:0007829" key="13">
    <source>
        <dbReference type="PDB" id="1G4R"/>
    </source>
</evidence>
<evidence type="ECO:0007829" key="14">
    <source>
        <dbReference type="PDB" id="2WTR"/>
    </source>
</evidence>
<evidence type="ECO:0007829" key="15">
    <source>
        <dbReference type="PDB" id="3GD1"/>
    </source>
</evidence>
<evidence type="ECO:0007829" key="16">
    <source>
        <dbReference type="PDB" id="7DF9"/>
    </source>
</evidence>
<evidence type="ECO:0007829" key="17">
    <source>
        <dbReference type="PDB" id="7DFA"/>
    </source>
</evidence>
<evidence type="ECO:0007829" key="18">
    <source>
        <dbReference type="PDB" id="7DFC"/>
    </source>
</evidence>
<name>ARRB1_BOVIN</name>
<protein>
    <recommendedName>
        <fullName>Beta-arrestin-1</fullName>
    </recommendedName>
    <alternativeName>
        <fullName>Arrestin beta-1</fullName>
    </alternativeName>
    <alternativeName>
        <fullName>Arrestin-2</fullName>
    </alternativeName>
</protein>
<proteinExistence type="evidence at protein level"/>
<comment type="function">
    <text evidence="1 2 6 8 9 10">Functions in regulating agonist-mediated G-protein coupled receptor (GPCR) signaling by mediating both receptor desensitization and resensitization processes. During homologous desensitization, beta-arrestins bind to the GPRK-phosphorylated receptor and sterically preclude its coupling to the cognate G-protein; the binding appears to require additional receptor determinants exposed only in the active receptor conformation. The beta-arrestins target many receptors for internalization by acting as endocytic adapters (CLASPs, clathrin-associated sorting proteins) and recruiting the GPRCs to the adapter protein 2 complex 2 (AP-2) in clathrin-coated pits (CCPs). However, the extent of beta-arrestin involvement appears to vary significantly depending on the receptor, agonist and cell type. Internalized arrestin-receptor complexes traffic to intracellular endosomes, where they remain uncoupled from G-proteins. Two different modes of arrestin-mediated internalization occur. Class A receptors, like ADRB2, OPRM1, ENDRA, D1AR and ADRA1B dissociate from beta-arrestin at or near the plasma membrane and undergo rapid recycling. Class B receptors, like AVPR2, AGTR1, NTSR1, TRHR and TACR1 internalize as a complex with arrestin and traffic with it to endosomal vesicles, presumably as desensitized receptors, for extended periods of time. Receptor resensitization then requires that receptor-bound arrestin is removed so that the receptor can be dephosphorylated and returned to the plasma membrane. Involved in internalization of P2RY4 and UTP-stimulated internalization of P2RY2. Involved in phosphorylation-dependent internalization of OPRD1 ands subsequent recycling. Involved in the degradation of cAMP by recruiting cAMP phosphodiesterases to ligand-activated receptors. Beta-arrestins function as multivalent adapter proteins that can switch the GPCR from a G-protein signaling mode that transmits short-lived signals from the plasma membrane via small molecule second messengers and ion channels to a beta-arrestin signaling mode that transmits a distinct set of signals that are initiated as the receptor internalizes and transits the intracellular compartment. Acts as a signaling scaffold for MAPK pathways such as MAPK1/3 (ERK1/2). ERK1/2 activated by the beta-arrestin scaffold is largely excluded from the nucleus and confined to cytoplasmic locations such as endocytic vesicles, also called beta-arrestin signalosomes. Recruits c-Src/SRC to ADRB2 resulting in ERK activation. GPCRs for which the beta-arrestin-mediated signaling relies on both ARRB1 and ARRB2 (codependent regulation) include ADRB2, F2RL1 and PTH1R. For some GPCRs the beta-arrestin-mediated signaling relies on either ARRB1 or ARRB2 and is inhibited by the other respective beta-arrestin form (reciprocal regulation). Inhibits ERK1/2 signaling in AGTR1- and AVPR2-mediated activation (reciprocal regulation). Is required for SP-stimulated endocytosis of NK1R and recruits c-Src/SRC to internalized NK1R resulting in ERK1/2 activation, which is required for the antiapoptotic effects of SP. Is involved in proteinase-activated F2RL1-mediated ERK activity. Acts as a signaling scaffold for the AKT1 pathway. Is involved in alpha-thrombin-stimulated AKT1 signaling. Is involved in IGF1-stimulated AKT1 signaling leading to increased protection from apoptosis. Involved in activation of the p38 MAPK signaling pathway and in actin bundle formation. Involved in F2RL1-mediated cytoskeletal rearrangement and chemotaxis. Involved in AGTR1-mediated stress fiber formation by acting together with GNAQ to activate RHOA. Appears to function as signaling scaffold involved in regulation of MIP-1-beta-stimulated CCR5-dependent chemotaxis. Involved in attenuation of NF-kappa-B-dependent transcription in response to GPCR or cytokine stimulation by interacting with and stabilizing CHUK. May serve as nuclear messenger for GPCRs. Involved in OPRD1-stimulated transcriptional regulation by translocating to CDKN1B and FOS promoter regions and recruiting EP300 resulting in acetylation of histone H4. Involved in regulation of LEF1 transcriptional activity via interaction with DVL1 and/or DVL2 Also involved in regulation of receptors other than GPCRs. Involved in Toll-like receptor and IL-1 receptor signaling through the interaction with TRAF6 which prevents TRAF6 autoubiquitination and oligomerization required for activation of NF-kappa-B and JUN. Involved in IL8-mediated granule release in neutrophils. Binds phosphoinositides. Binds inositol hexakisphosphate (InsP6) (By similarity). Required for atypical chemokine receptor ACKR2-induced RAC1-LIMK1-PAK1-dependent phosphorylation of cofilin (CFL1) and for the up-regulation of ACKR2 from endosomal compartment to cell membrane, increasing its efficiency in chemokine uptake and degradation. Involved in the internalization of the atypical chemokine receptor ACKR3 (By similarity). Negatively regulates the NOTCH signaling pathway by mediating the ubiquitination and degradation of NOTCH1 by ITCH. Participates in the recruitment of the ubiquitin-protein ligase to the receptor (By similarity).</text>
</comment>
<comment type="subunit">
    <text evidence="2">Monomer. Homodimer. Homooligomer; the self-association is mediated by InsP6-binding. Heterooligomer with ARRB2; the association is mediated by InsP6-binding. Interacts with ADRB2 (phosphorylated). Interacts with CHRM2 (phosphorylated). Interacts with LHCGR. Interacts with CYTH2 and CASR. Interacts with AP2B1 (dephosphorylated at 'Tyr-737'); phosphorylation of AP2B1 at 'Tyr-737' disrupts the interaction. Interacts (dephosphorylated at Ser-412) with CLTC. Interacts with CCR2 and GRK2. Interacts with CRR5. Interacts with PTAFR (phosphorylated on serine residues). Interacts with CLTC and MAP2K3. Interacts with CREB1. Interacts with TRAF6. Interacts with IGF1R and MDM2. Interacts with C5AR1. Interacts with PDE4D. Interacts with SRC (via the SH3 domain and the protein kinase domain); the interaction is independent of the phosphorylation state of SRC C-terminus. Interacts with TACR1. Interacts with RAF1. Interacts with CHUK, IKBKB and MAP3K14. Interacts with DVL1; the interaction is enhanced by phosphorylation of DVL1. Interacts with DVL2; the interaction is enhanced by phosphorylation of DVL2. Interacts with IGF1R. Associates with MAP kinase p38. Part of a MAPK signaling complex consisting of TACR1, ARRB1, SRC, MAPK1 (activated) and MAPK3 (activated). Part of a MAPK signaling complex consisting of F2RL1, ARRB1, RAF1, MAPK1 (activated) and MAPK3 (activated). Interacts with GPR143 (By similarity). Interacts with MAP2K4/MKK4. Interacts with HCK and CXCR1 (phosphorylated) (By similarity). Interacts with ACKR3 and ACKR4 (By similarity). Interacts with ARRDC1; the interaction is direct. Interacts with GPR61, GPR62 and GPR135 (By similarity).</text>
</comment>
<comment type="subcellular location">
    <subcellularLocation>
        <location>Cytoplasm</location>
    </subcellularLocation>
    <subcellularLocation>
        <location>Nucleus</location>
    </subcellularLocation>
    <subcellularLocation>
        <location>Cell membrane</location>
    </subcellularLocation>
    <subcellularLocation>
        <location evidence="11">Membrane</location>
        <location evidence="11">Clathrin-coated pit</location>
    </subcellularLocation>
    <subcellularLocation>
        <location evidence="1">Cell projection</location>
        <location evidence="1">Pseudopodium</location>
    </subcellularLocation>
    <subcellularLocation>
        <location evidence="1">Cytoplasmic vesicle</location>
    </subcellularLocation>
    <text evidence="1">Translocates to the plasma membrane and colocalizes with antagonist-stimulated GPCRs. The monomeric form is predominantly located in the nucleus. The oligomeric form is located in the cytoplasm. Translocates to the nucleus upon stimulation of OPRD1 (By similarity).</text>
</comment>
<comment type="alternative products">
    <event type="alternative splicing"/>
    <isoform>
        <id>P17870-1</id>
        <name>1A</name>
        <sequence type="displayed"/>
    </isoform>
    <isoform>
        <id>P17870-2</id>
        <name>1B</name>
        <sequence type="described" ref="VSP_000321"/>
    </isoform>
</comment>
<comment type="tissue specificity">
    <text>Beta-arrestin 1A is found in cortex, cerebellum, striatum, pineal gland, retina and heart. Beta-arrestin 1B is found in spleen, lung, pituitary and kidney.</text>
</comment>
<comment type="domain">
    <text evidence="1">The [DE]-X(1,2)-F-X-X-[FL]-X-X-X-R motif mediates interaction the AP-2 complex subunit AP2B1. Binding to phosphorylated GPCRs induces a conformationanl change that exposes the motif to the surface (By similarity).</text>
</comment>
<comment type="domain">
    <text>The N-terminus binds InsP6 with low affinity.</text>
</comment>
<comment type="domain">
    <text>The C-terminus binds InsP6 with high affinity.</text>
</comment>
<comment type="PTM">
    <text>Constitutively phosphorylated at Ser-412 in the cytoplasm. At the plasma membrane, is rapidly dephosphorylated, a process that is required for clathrin binding and ADRB2 endocytosis but not for ADRB2 binding and desensitization. Once internalized, is rephosphorylated.</text>
</comment>
<comment type="PTM">
    <text evidence="1">The ubiquitination status appears to regulate the formation and trafficking of beta-arrestin-GPCR complexes and signaling. Ubiquitination appears to occur GPCR-specific. Ubiquitinated by MDM2; the ubiquitination is required for rapid internalization of ADRB2. Deubiquitinated by USP33; the deubiquitination leads to a dissociation of the beta-arrestin-GPCR complex. Stimulation of a class A GPCR, such as ADRB2, induces transient ubiquitination and subsequently promotes association with USP33 (By similarity).</text>
</comment>
<comment type="similarity">
    <text evidence="11">Belongs to the arrestin family.</text>
</comment>